<reference key="1">
    <citation type="journal article" date="2001" name="Proc. Natl. Acad. Sci. U.S.A.">
        <title>Analysis of the chromosome sequence of the legume symbiont Sinorhizobium meliloti strain 1021.</title>
        <authorList>
            <person name="Capela D."/>
            <person name="Barloy-Hubler F."/>
            <person name="Gouzy J."/>
            <person name="Bothe G."/>
            <person name="Ampe F."/>
            <person name="Batut J."/>
            <person name="Boistard P."/>
            <person name="Becker A."/>
            <person name="Boutry M."/>
            <person name="Cadieu E."/>
            <person name="Dreano S."/>
            <person name="Gloux S."/>
            <person name="Godrie T."/>
            <person name="Goffeau A."/>
            <person name="Kahn D."/>
            <person name="Kiss E."/>
            <person name="Lelaure V."/>
            <person name="Masuy D."/>
            <person name="Pohl T."/>
            <person name="Portetelle D."/>
            <person name="Puehler A."/>
            <person name="Purnelle B."/>
            <person name="Ramsperger U."/>
            <person name="Renard C."/>
            <person name="Thebault P."/>
            <person name="Vandenbol M."/>
            <person name="Weidner S."/>
            <person name="Galibert F."/>
        </authorList>
    </citation>
    <scope>NUCLEOTIDE SEQUENCE [LARGE SCALE GENOMIC DNA]</scope>
    <source>
        <strain>1021</strain>
    </source>
</reference>
<reference key="2">
    <citation type="journal article" date="2001" name="Science">
        <title>The composite genome of the legume symbiont Sinorhizobium meliloti.</title>
        <authorList>
            <person name="Galibert F."/>
            <person name="Finan T.M."/>
            <person name="Long S.R."/>
            <person name="Puehler A."/>
            <person name="Abola P."/>
            <person name="Ampe F."/>
            <person name="Barloy-Hubler F."/>
            <person name="Barnett M.J."/>
            <person name="Becker A."/>
            <person name="Boistard P."/>
            <person name="Bothe G."/>
            <person name="Boutry M."/>
            <person name="Bowser L."/>
            <person name="Buhrmester J."/>
            <person name="Cadieu E."/>
            <person name="Capela D."/>
            <person name="Chain P."/>
            <person name="Cowie A."/>
            <person name="Davis R.W."/>
            <person name="Dreano S."/>
            <person name="Federspiel N.A."/>
            <person name="Fisher R.F."/>
            <person name="Gloux S."/>
            <person name="Godrie T."/>
            <person name="Goffeau A."/>
            <person name="Golding B."/>
            <person name="Gouzy J."/>
            <person name="Gurjal M."/>
            <person name="Hernandez-Lucas I."/>
            <person name="Hong A."/>
            <person name="Huizar L."/>
            <person name="Hyman R.W."/>
            <person name="Jones T."/>
            <person name="Kahn D."/>
            <person name="Kahn M.L."/>
            <person name="Kalman S."/>
            <person name="Keating D.H."/>
            <person name="Kiss E."/>
            <person name="Komp C."/>
            <person name="Lelaure V."/>
            <person name="Masuy D."/>
            <person name="Palm C."/>
            <person name="Peck M.C."/>
            <person name="Pohl T.M."/>
            <person name="Portetelle D."/>
            <person name="Purnelle B."/>
            <person name="Ramsperger U."/>
            <person name="Surzycki R."/>
            <person name="Thebault P."/>
            <person name="Vandenbol M."/>
            <person name="Vorhoelter F.J."/>
            <person name="Weidner S."/>
            <person name="Wells D.H."/>
            <person name="Wong K."/>
            <person name="Yeh K.-C."/>
            <person name="Batut J."/>
        </authorList>
    </citation>
    <scope>NUCLEOTIDE SEQUENCE [LARGE SCALE GENOMIC DNA]</scope>
    <source>
        <strain>1021</strain>
    </source>
</reference>
<feature type="chain" id="PRO_0000103498" description="Dihydroxy-acid dehydratase">
    <location>
        <begin position="1"/>
        <end position="612"/>
    </location>
</feature>
<feature type="active site" description="Proton acceptor" evidence="1">
    <location>
        <position position="517"/>
    </location>
</feature>
<feature type="binding site" evidence="1">
    <location>
        <position position="81"/>
    </location>
    <ligand>
        <name>Mg(2+)</name>
        <dbReference type="ChEBI" id="CHEBI:18420"/>
    </ligand>
</feature>
<feature type="binding site" evidence="1">
    <location>
        <position position="122"/>
    </location>
    <ligand>
        <name>[2Fe-2S] cluster</name>
        <dbReference type="ChEBI" id="CHEBI:190135"/>
    </ligand>
</feature>
<feature type="binding site" evidence="1">
    <location>
        <position position="123"/>
    </location>
    <ligand>
        <name>Mg(2+)</name>
        <dbReference type="ChEBI" id="CHEBI:18420"/>
    </ligand>
</feature>
<feature type="binding site" description="via carbamate group" evidence="1">
    <location>
        <position position="124"/>
    </location>
    <ligand>
        <name>Mg(2+)</name>
        <dbReference type="ChEBI" id="CHEBI:18420"/>
    </ligand>
</feature>
<feature type="binding site" evidence="1">
    <location>
        <position position="195"/>
    </location>
    <ligand>
        <name>[2Fe-2S] cluster</name>
        <dbReference type="ChEBI" id="CHEBI:190135"/>
    </ligand>
</feature>
<feature type="binding site" evidence="1">
    <location>
        <position position="491"/>
    </location>
    <ligand>
        <name>Mg(2+)</name>
        <dbReference type="ChEBI" id="CHEBI:18420"/>
    </ligand>
</feature>
<feature type="modified residue" description="N6-carboxylysine" evidence="1">
    <location>
        <position position="124"/>
    </location>
</feature>
<evidence type="ECO:0000255" key="1">
    <source>
        <dbReference type="HAMAP-Rule" id="MF_00012"/>
    </source>
</evidence>
<keyword id="KW-0001">2Fe-2S</keyword>
<keyword id="KW-0028">Amino-acid biosynthesis</keyword>
<keyword id="KW-0100">Branched-chain amino acid biosynthesis</keyword>
<keyword id="KW-0408">Iron</keyword>
<keyword id="KW-0411">Iron-sulfur</keyword>
<keyword id="KW-0456">Lyase</keyword>
<keyword id="KW-0460">Magnesium</keyword>
<keyword id="KW-0479">Metal-binding</keyword>
<keyword id="KW-1185">Reference proteome</keyword>
<organism>
    <name type="scientific">Rhizobium meliloti (strain 1021)</name>
    <name type="common">Ensifer meliloti</name>
    <name type="synonym">Sinorhizobium meliloti</name>
    <dbReference type="NCBI Taxonomy" id="266834"/>
    <lineage>
        <taxon>Bacteria</taxon>
        <taxon>Pseudomonadati</taxon>
        <taxon>Pseudomonadota</taxon>
        <taxon>Alphaproteobacteria</taxon>
        <taxon>Hyphomicrobiales</taxon>
        <taxon>Rhizobiaceae</taxon>
        <taxon>Sinorhizobium/Ensifer group</taxon>
        <taxon>Sinorhizobium</taxon>
    </lineage>
</organism>
<dbReference type="EC" id="4.2.1.9" evidence="1"/>
<dbReference type="EMBL" id="AL591688">
    <property type="protein sequence ID" value="CAC47407.1"/>
    <property type="molecule type" value="Genomic_DNA"/>
</dbReference>
<dbReference type="RefSeq" id="NP_386934.1">
    <property type="nucleotide sequence ID" value="NC_003047.1"/>
</dbReference>
<dbReference type="RefSeq" id="WP_010970221.1">
    <property type="nucleotide sequence ID" value="NC_003047.1"/>
</dbReference>
<dbReference type="SMR" id="Q92M28"/>
<dbReference type="EnsemblBacteria" id="CAC47407">
    <property type="protein sequence ID" value="CAC47407"/>
    <property type="gene ID" value="SMc04045"/>
</dbReference>
<dbReference type="GeneID" id="89577256"/>
<dbReference type="KEGG" id="sme:SMc04045"/>
<dbReference type="PATRIC" id="fig|266834.11.peg.4347"/>
<dbReference type="eggNOG" id="COG0129">
    <property type="taxonomic scope" value="Bacteria"/>
</dbReference>
<dbReference type="HOGENOM" id="CLU_014271_4_2_5"/>
<dbReference type="OrthoDB" id="9807077at2"/>
<dbReference type="UniPathway" id="UPA00047">
    <property type="reaction ID" value="UER00057"/>
</dbReference>
<dbReference type="UniPathway" id="UPA00049">
    <property type="reaction ID" value="UER00061"/>
</dbReference>
<dbReference type="Proteomes" id="UP000001976">
    <property type="component" value="Chromosome"/>
</dbReference>
<dbReference type="GO" id="GO:0005829">
    <property type="term" value="C:cytosol"/>
    <property type="evidence" value="ECO:0007669"/>
    <property type="project" value="TreeGrafter"/>
</dbReference>
<dbReference type="GO" id="GO:0051537">
    <property type="term" value="F:2 iron, 2 sulfur cluster binding"/>
    <property type="evidence" value="ECO:0007669"/>
    <property type="project" value="UniProtKB-UniRule"/>
</dbReference>
<dbReference type="GO" id="GO:0004160">
    <property type="term" value="F:dihydroxy-acid dehydratase activity"/>
    <property type="evidence" value="ECO:0007669"/>
    <property type="project" value="UniProtKB-UniRule"/>
</dbReference>
<dbReference type="GO" id="GO:0000287">
    <property type="term" value="F:magnesium ion binding"/>
    <property type="evidence" value="ECO:0007669"/>
    <property type="project" value="UniProtKB-UniRule"/>
</dbReference>
<dbReference type="GO" id="GO:0009097">
    <property type="term" value="P:isoleucine biosynthetic process"/>
    <property type="evidence" value="ECO:0007669"/>
    <property type="project" value="UniProtKB-UniRule"/>
</dbReference>
<dbReference type="GO" id="GO:0009099">
    <property type="term" value="P:L-valine biosynthetic process"/>
    <property type="evidence" value="ECO:0007669"/>
    <property type="project" value="UniProtKB-UniRule"/>
</dbReference>
<dbReference type="FunFam" id="3.50.30.80:FF:000001">
    <property type="entry name" value="Dihydroxy-acid dehydratase"/>
    <property type="match status" value="1"/>
</dbReference>
<dbReference type="Gene3D" id="3.50.30.80">
    <property type="entry name" value="IlvD/EDD C-terminal domain-like"/>
    <property type="match status" value="1"/>
</dbReference>
<dbReference type="HAMAP" id="MF_00012">
    <property type="entry name" value="IlvD"/>
    <property type="match status" value="1"/>
</dbReference>
<dbReference type="InterPro" id="IPR042096">
    <property type="entry name" value="Dihydro-acid_dehy_C"/>
</dbReference>
<dbReference type="InterPro" id="IPR004404">
    <property type="entry name" value="DihydroxyA_deHydtase"/>
</dbReference>
<dbReference type="InterPro" id="IPR020558">
    <property type="entry name" value="DiOHA_6PGluconate_deHydtase_CS"/>
</dbReference>
<dbReference type="InterPro" id="IPR056740">
    <property type="entry name" value="ILV_EDD_C"/>
</dbReference>
<dbReference type="InterPro" id="IPR000581">
    <property type="entry name" value="ILV_EDD_N"/>
</dbReference>
<dbReference type="InterPro" id="IPR037237">
    <property type="entry name" value="IlvD/EDD_N"/>
</dbReference>
<dbReference type="NCBIfam" id="TIGR00110">
    <property type="entry name" value="ilvD"/>
    <property type="match status" value="1"/>
</dbReference>
<dbReference type="NCBIfam" id="NF009103">
    <property type="entry name" value="PRK12448.1"/>
    <property type="match status" value="1"/>
</dbReference>
<dbReference type="PANTHER" id="PTHR43661">
    <property type="entry name" value="D-XYLONATE DEHYDRATASE"/>
    <property type="match status" value="1"/>
</dbReference>
<dbReference type="PANTHER" id="PTHR43661:SF3">
    <property type="entry name" value="D-XYLONATE DEHYDRATASE YAGF-RELATED"/>
    <property type="match status" value="1"/>
</dbReference>
<dbReference type="Pfam" id="PF24877">
    <property type="entry name" value="ILV_EDD_C"/>
    <property type="match status" value="1"/>
</dbReference>
<dbReference type="Pfam" id="PF00920">
    <property type="entry name" value="ILVD_EDD_N"/>
    <property type="match status" value="1"/>
</dbReference>
<dbReference type="SUPFAM" id="SSF143975">
    <property type="entry name" value="IlvD/EDD N-terminal domain-like"/>
    <property type="match status" value="1"/>
</dbReference>
<dbReference type="SUPFAM" id="SSF52016">
    <property type="entry name" value="LeuD/IlvD-like"/>
    <property type="match status" value="1"/>
</dbReference>
<dbReference type="PROSITE" id="PS00886">
    <property type="entry name" value="ILVD_EDD_1"/>
    <property type="match status" value="1"/>
</dbReference>
<dbReference type="PROSITE" id="PS00887">
    <property type="entry name" value="ILVD_EDD_2"/>
    <property type="match status" value="1"/>
</dbReference>
<gene>
    <name evidence="1" type="primary">ilvD</name>
    <name type="ordered locus">R02828</name>
    <name type="ORF">SMc04045</name>
</gene>
<accession>Q92M28</accession>
<sequence length="612" mass="65469">MPAYRSRTTTHGRNMAGARGLWRATGMKDSDFGKPIIAVVNSFTQFVPGHVHLKDLGQLVAREIEAAGGVAKEFNTIAVDDGIAMGHDGMLYSLPSREIIADSVEYMVNAHCADAMVCISNCDKITPGMLMAALRLNIPAVFVSGGPMEAGKVVLHGKTHALDLVDAMVAAADDKVSDEDVQIIERSACPTCGSCSGMFTANSMNCLTEALGLSLPGNGSTLATHADRKRLFVEAGHLIVDLARRYYEQEDERVLPRNIATKQAFENAMALDIAMGGSTNTVLHILAAAYEGEIDFTMDDIDRLSRKVPCLSKVAPAKADVHMEDVHRAGGIMSILGELDKGGLINRDCPTVHAETLGDAIDRWDITRTSSDTVRKFFRAAPGGIPTQVAFSQEARWDELDTDRENGVIRSVEHPFSKDGGLAVLKGNIALDGCIVKTAGVDESILKFSGPARVFESQDAAVKGILANEIKAGDVVVIRYEGPKGGPGMQEMLYPTSYLKSKGLGKACALITDGRFSGGTSGLSIGHVSPEAANGGTIGLVREGDMIDIDIPNRTISLRVDEAELAARRTEQDAKGWKPVEQRKRRVTTALKAYAAFATSADRGAVRDLGDR</sequence>
<proteinExistence type="inferred from homology"/>
<name>ILVD_RHIME</name>
<comment type="function">
    <text evidence="1">Functions in the biosynthesis of branched-chain amino acids. Catalyzes the dehydration of (2R,3R)-2,3-dihydroxy-3-methylpentanoate (2,3-dihydroxy-3-methylvalerate) into 2-oxo-3-methylpentanoate (2-oxo-3-methylvalerate) and of (2R)-2,3-dihydroxy-3-methylbutanoate (2,3-dihydroxyisovalerate) into 2-oxo-3-methylbutanoate (2-oxoisovalerate), the penultimate precursor to L-isoleucine and L-valine, respectively.</text>
</comment>
<comment type="catalytic activity">
    <reaction evidence="1">
        <text>(2R)-2,3-dihydroxy-3-methylbutanoate = 3-methyl-2-oxobutanoate + H2O</text>
        <dbReference type="Rhea" id="RHEA:24809"/>
        <dbReference type="ChEBI" id="CHEBI:11851"/>
        <dbReference type="ChEBI" id="CHEBI:15377"/>
        <dbReference type="ChEBI" id="CHEBI:49072"/>
        <dbReference type="EC" id="4.2.1.9"/>
    </reaction>
    <physiologicalReaction direction="left-to-right" evidence="1">
        <dbReference type="Rhea" id="RHEA:24810"/>
    </physiologicalReaction>
</comment>
<comment type="catalytic activity">
    <reaction evidence="1">
        <text>(2R,3R)-2,3-dihydroxy-3-methylpentanoate = (S)-3-methyl-2-oxopentanoate + H2O</text>
        <dbReference type="Rhea" id="RHEA:27694"/>
        <dbReference type="ChEBI" id="CHEBI:15377"/>
        <dbReference type="ChEBI" id="CHEBI:35146"/>
        <dbReference type="ChEBI" id="CHEBI:49258"/>
        <dbReference type="EC" id="4.2.1.9"/>
    </reaction>
    <physiologicalReaction direction="left-to-right" evidence="1">
        <dbReference type="Rhea" id="RHEA:27695"/>
    </physiologicalReaction>
</comment>
<comment type="cofactor">
    <cofactor evidence="1">
        <name>[2Fe-2S] cluster</name>
        <dbReference type="ChEBI" id="CHEBI:190135"/>
    </cofactor>
    <text evidence="1">Binds 1 [2Fe-2S] cluster per subunit. This cluster acts as a Lewis acid cofactor.</text>
</comment>
<comment type="cofactor">
    <cofactor evidence="1">
        <name>Mg(2+)</name>
        <dbReference type="ChEBI" id="CHEBI:18420"/>
    </cofactor>
</comment>
<comment type="pathway">
    <text evidence="1">Amino-acid biosynthesis; L-isoleucine biosynthesis; L-isoleucine from 2-oxobutanoate: step 3/4.</text>
</comment>
<comment type="pathway">
    <text evidence="1">Amino-acid biosynthesis; L-valine biosynthesis; L-valine from pyruvate: step 3/4.</text>
</comment>
<comment type="subunit">
    <text evidence="1">Homodimer.</text>
</comment>
<comment type="similarity">
    <text evidence="1">Belongs to the IlvD/Edd family.</text>
</comment>
<protein>
    <recommendedName>
        <fullName evidence="1">Dihydroxy-acid dehydratase</fullName>
        <shortName evidence="1">DAD</shortName>
        <ecNumber evidence="1">4.2.1.9</ecNumber>
    </recommendedName>
</protein>